<protein>
    <recommendedName>
        <fullName evidence="1">Isoleucine--tRNA ligase</fullName>
        <ecNumber evidence="1">6.1.1.5</ecNumber>
    </recommendedName>
    <alternativeName>
        <fullName evidence="1">Isoleucyl-tRNA synthetase</fullName>
        <shortName evidence="1">IleRS</shortName>
    </alternativeName>
</protein>
<evidence type="ECO:0000255" key="1">
    <source>
        <dbReference type="HAMAP-Rule" id="MF_02002"/>
    </source>
</evidence>
<organism>
    <name type="scientific">Prochlorococcus marinus (strain MIT 9515)</name>
    <dbReference type="NCBI Taxonomy" id="167542"/>
    <lineage>
        <taxon>Bacteria</taxon>
        <taxon>Bacillati</taxon>
        <taxon>Cyanobacteriota</taxon>
        <taxon>Cyanophyceae</taxon>
        <taxon>Synechococcales</taxon>
        <taxon>Prochlorococcaceae</taxon>
        <taxon>Prochlorococcus</taxon>
    </lineage>
</organism>
<accession>A2BUL8</accession>
<gene>
    <name evidence="1" type="primary">ileS</name>
    <name type="ordered locus">P9515_02701</name>
</gene>
<proteinExistence type="inferred from homology"/>
<feature type="chain" id="PRO_1000022099" description="Isoleucine--tRNA ligase">
    <location>
        <begin position="1"/>
        <end position="965"/>
    </location>
</feature>
<feature type="short sequence motif" description="'HIGH' region">
    <location>
        <begin position="68"/>
        <end position="78"/>
    </location>
</feature>
<feature type="short sequence motif" description="'KMSKS' region">
    <location>
        <begin position="623"/>
        <end position="627"/>
    </location>
</feature>
<feature type="binding site" evidence="1">
    <location>
        <position position="582"/>
    </location>
    <ligand>
        <name>L-isoleucyl-5'-AMP</name>
        <dbReference type="ChEBI" id="CHEBI:178002"/>
    </ligand>
</feature>
<feature type="binding site" evidence="1">
    <location>
        <position position="626"/>
    </location>
    <ligand>
        <name>ATP</name>
        <dbReference type="ChEBI" id="CHEBI:30616"/>
    </ligand>
</feature>
<feature type="binding site" evidence="1">
    <location>
        <position position="936"/>
    </location>
    <ligand>
        <name>Zn(2+)</name>
        <dbReference type="ChEBI" id="CHEBI:29105"/>
    </ligand>
</feature>
<feature type="binding site" evidence="1">
    <location>
        <position position="939"/>
    </location>
    <ligand>
        <name>Zn(2+)</name>
        <dbReference type="ChEBI" id="CHEBI:29105"/>
    </ligand>
</feature>
<feature type="binding site" evidence="1">
    <location>
        <position position="956"/>
    </location>
    <ligand>
        <name>Zn(2+)</name>
        <dbReference type="ChEBI" id="CHEBI:29105"/>
    </ligand>
</feature>
<feature type="binding site" evidence="1">
    <location>
        <position position="959"/>
    </location>
    <ligand>
        <name>Zn(2+)</name>
        <dbReference type="ChEBI" id="CHEBI:29105"/>
    </ligand>
</feature>
<reference key="1">
    <citation type="journal article" date="2007" name="PLoS Genet.">
        <title>Patterns and implications of gene gain and loss in the evolution of Prochlorococcus.</title>
        <authorList>
            <person name="Kettler G.C."/>
            <person name="Martiny A.C."/>
            <person name="Huang K."/>
            <person name="Zucker J."/>
            <person name="Coleman M.L."/>
            <person name="Rodrigue S."/>
            <person name="Chen F."/>
            <person name="Lapidus A."/>
            <person name="Ferriera S."/>
            <person name="Johnson J."/>
            <person name="Steglich C."/>
            <person name="Church G.M."/>
            <person name="Richardson P."/>
            <person name="Chisholm S.W."/>
        </authorList>
    </citation>
    <scope>NUCLEOTIDE SEQUENCE [LARGE SCALE GENOMIC DNA]</scope>
    <source>
        <strain>MIT 9515</strain>
    </source>
</reference>
<dbReference type="EC" id="6.1.1.5" evidence="1"/>
<dbReference type="EMBL" id="CP000552">
    <property type="protein sequence ID" value="ABM71479.1"/>
    <property type="molecule type" value="Genomic_DNA"/>
</dbReference>
<dbReference type="RefSeq" id="WP_011819591.1">
    <property type="nucleotide sequence ID" value="NC_008817.1"/>
</dbReference>
<dbReference type="SMR" id="A2BUL8"/>
<dbReference type="STRING" id="167542.P9515_02701"/>
<dbReference type="GeneID" id="60201553"/>
<dbReference type="KEGG" id="pmc:P9515_02701"/>
<dbReference type="eggNOG" id="COG0060">
    <property type="taxonomic scope" value="Bacteria"/>
</dbReference>
<dbReference type="HOGENOM" id="CLU_001493_7_0_3"/>
<dbReference type="OrthoDB" id="9810365at2"/>
<dbReference type="Proteomes" id="UP000001589">
    <property type="component" value="Chromosome"/>
</dbReference>
<dbReference type="GO" id="GO:0005737">
    <property type="term" value="C:cytoplasm"/>
    <property type="evidence" value="ECO:0007669"/>
    <property type="project" value="UniProtKB-SubCell"/>
</dbReference>
<dbReference type="GO" id="GO:0002161">
    <property type="term" value="F:aminoacyl-tRNA deacylase activity"/>
    <property type="evidence" value="ECO:0007669"/>
    <property type="project" value="InterPro"/>
</dbReference>
<dbReference type="GO" id="GO:0005524">
    <property type="term" value="F:ATP binding"/>
    <property type="evidence" value="ECO:0007669"/>
    <property type="project" value="UniProtKB-UniRule"/>
</dbReference>
<dbReference type="GO" id="GO:0004822">
    <property type="term" value="F:isoleucine-tRNA ligase activity"/>
    <property type="evidence" value="ECO:0007669"/>
    <property type="project" value="UniProtKB-UniRule"/>
</dbReference>
<dbReference type="GO" id="GO:0000049">
    <property type="term" value="F:tRNA binding"/>
    <property type="evidence" value="ECO:0007669"/>
    <property type="project" value="InterPro"/>
</dbReference>
<dbReference type="GO" id="GO:0008270">
    <property type="term" value="F:zinc ion binding"/>
    <property type="evidence" value="ECO:0007669"/>
    <property type="project" value="UniProtKB-UniRule"/>
</dbReference>
<dbReference type="GO" id="GO:0006428">
    <property type="term" value="P:isoleucyl-tRNA aminoacylation"/>
    <property type="evidence" value="ECO:0007669"/>
    <property type="project" value="UniProtKB-UniRule"/>
</dbReference>
<dbReference type="CDD" id="cd07960">
    <property type="entry name" value="Anticodon_Ia_Ile_BEm"/>
    <property type="match status" value="1"/>
</dbReference>
<dbReference type="CDD" id="cd00818">
    <property type="entry name" value="IleRS_core"/>
    <property type="match status" value="1"/>
</dbReference>
<dbReference type="FunFam" id="3.40.50.620:FF:000111">
    <property type="entry name" value="Mitochondrial isoleucyl-tRNA synthetase"/>
    <property type="match status" value="1"/>
</dbReference>
<dbReference type="Gene3D" id="1.10.730.20">
    <property type="match status" value="1"/>
</dbReference>
<dbReference type="Gene3D" id="3.40.50.620">
    <property type="entry name" value="HUPs"/>
    <property type="match status" value="2"/>
</dbReference>
<dbReference type="Gene3D" id="1.10.10.830">
    <property type="entry name" value="Ile-tRNA synthetase CP2 domain-like"/>
    <property type="match status" value="1"/>
</dbReference>
<dbReference type="HAMAP" id="MF_02002">
    <property type="entry name" value="Ile_tRNA_synth_type1"/>
    <property type="match status" value="1"/>
</dbReference>
<dbReference type="InterPro" id="IPR001412">
    <property type="entry name" value="aa-tRNA-synth_I_CS"/>
</dbReference>
<dbReference type="InterPro" id="IPR002300">
    <property type="entry name" value="aa-tRNA-synth_Ia"/>
</dbReference>
<dbReference type="InterPro" id="IPR033708">
    <property type="entry name" value="Anticodon_Ile_BEm"/>
</dbReference>
<dbReference type="InterPro" id="IPR002301">
    <property type="entry name" value="Ile-tRNA-ligase"/>
</dbReference>
<dbReference type="InterPro" id="IPR023585">
    <property type="entry name" value="Ile-tRNA-ligase_type1"/>
</dbReference>
<dbReference type="InterPro" id="IPR050081">
    <property type="entry name" value="Ile-tRNA_ligase"/>
</dbReference>
<dbReference type="InterPro" id="IPR013155">
    <property type="entry name" value="M/V/L/I-tRNA-synth_anticd-bd"/>
</dbReference>
<dbReference type="InterPro" id="IPR014729">
    <property type="entry name" value="Rossmann-like_a/b/a_fold"/>
</dbReference>
<dbReference type="InterPro" id="IPR009080">
    <property type="entry name" value="tRNAsynth_Ia_anticodon-bd"/>
</dbReference>
<dbReference type="InterPro" id="IPR009008">
    <property type="entry name" value="Val/Leu/Ile-tRNA-synth_edit"/>
</dbReference>
<dbReference type="InterPro" id="IPR010663">
    <property type="entry name" value="Znf_FPG/IleRS"/>
</dbReference>
<dbReference type="NCBIfam" id="TIGR00392">
    <property type="entry name" value="ileS"/>
    <property type="match status" value="1"/>
</dbReference>
<dbReference type="PANTHER" id="PTHR42765:SF1">
    <property type="entry name" value="ISOLEUCINE--TRNA LIGASE, MITOCHONDRIAL"/>
    <property type="match status" value="1"/>
</dbReference>
<dbReference type="PANTHER" id="PTHR42765">
    <property type="entry name" value="SOLEUCYL-TRNA SYNTHETASE"/>
    <property type="match status" value="1"/>
</dbReference>
<dbReference type="Pfam" id="PF08264">
    <property type="entry name" value="Anticodon_1"/>
    <property type="match status" value="1"/>
</dbReference>
<dbReference type="Pfam" id="PF00133">
    <property type="entry name" value="tRNA-synt_1"/>
    <property type="match status" value="1"/>
</dbReference>
<dbReference type="Pfam" id="PF06827">
    <property type="entry name" value="zf-FPG_IleRS"/>
    <property type="match status" value="1"/>
</dbReference>
<dbReference type="PRINTS" id="PR00984">
    <property type="entry name" value="TRNASYNTHILE"/>
</dbReference>
<dbReference type="SUPFAM" id="SSF47323">
    <property type="entry name" value="Anticodon-binding domain of a subclass of class I aminoacyl-tRNA synthetases"/>
    <property type="match status" value="1"/>
</dbReference>
<dbReference type="SUPFAM" id="SSF52374">
    <property type="entry name" value="Nucleotidylyl transferase"/>
    <property type="match status" value="1"/>
</dbReference>
<dbReference type="SUPFAM" id="SSF50677">
    <property type="entry name" value="ValRS/IleRS/LeuRS editing domain"/>
    <property type="match status" value="1"/>
</dbReference>
<dbReference type="PROSITE" id="PS00178">
    <property type="entry name" value="AA_TRNA_LIGASE_I"/>
    <property type="match status" value="1"/>
</dbReference>
<comment type="function">
    <text evidence="1">Catalyzes the attachment of isoleucine to tRNA(Ile). As IleRS can inadvertently accommodate and process structurally similar amino acids such as valine, to avoid such errors it has two additional distinct tRNA(Ile)-dependent editing activities. One activity is designated as 'pretransfer' editing and involves the hydrolysis of activated Val-AMP. The other activity is designated 'posttransfer' editing and involves deacylation of mischarged Val-tRNA(Ile).</text>
</comment>
<comment type="catalytic activity">
    <reaction evidence="1">
        <text>tRNA(Ile) + L-isoleucine + ATP = L-isoleucyl-tRNA(Ile) + AMP + diphosphate</text>
        <dbReference type="Rhea" id="RHEA:11060"/>
        <dbReference type="Rhea" id="RHEA-COMP:9666"/>
        <dbReference type="Rhea" id="RHEA-COMP:9695"/>
        <dbReference type="ChEBI" id="CHEBI:30616"/>
        <dbReference type="ChEBI" id="CHEBI:33019"/>
        <dbReference type="ChEBI" id="CHEBI:58045"/>
        <dbReference type="ChEBI" id="CHEBI:78442"/>
        <dbReference type="ChEBI" id="CHEBI:78528"/>
        <dbReference type="ChEBI" id="CHEBI:456215"/>
        <dbReference type="EC" id="6.1.1.5"/>
    </reaction>
</comment>
<comment type="cofactor">
    <cofactor evidence="1">
        <name>Zn(2+)</name>
        <dbReference type="ChEBI" id="CHEBI:29105"/>
    </cofactor>
    <text evidence="1">Binds 1 zinc ion per subunit.</text>
</comment>
<comment type="subunit">
    <text evidence="1">Monomer.</text>
</comment>
<comment type="subcellular location">
    <subcellularLocation>
        <location evidence="1">Cytoplasm</location>
    </subcellularLocation>
</comment>
<comment type="domain">
    <text evidence="1">IleRS has two distinct active sites: one for aminoacylation and one for editing. The misactivated valine is translocated from the active site to the editing site, which sterically excludes the correctly activated isoleucine. The single editing site contains two valyl binding pockets, one specific for each substrate (Val-AMP or Val-tRNA(Ile)).</text>
</comment>
<comment type="similarity">
    <text evidence="1">Belongs to the class-I aminoacyl-tRNA synthetase family. IleS type 1 subfamily.</text>
</comment>
<name>SYI_PROM5</name>
<keyword id="KW-0030">Aminoacyl-tRNA synthetase</keyword>
<keyword id="KW-0067">ATP-binding</keyword>
<keyword id="KW-0963">Cytoplasm</keyword>
<keyword id="KW-0436">Ligase</keyword>
<keyword id="KW-0479">Metal-binding</keyword>
<keyword id="KW-0547">Nucleotide-binding</keyword>
<keyword id="KW-0648">Protein biosynthesis</keyword>
<keyword id="KW-0862">Zinc</keyword>
<sequence length="965" mass="111215">MKPKNNKDKKSKFSYKETLNLLKTDFSMRANSVSREPQIQEFWLKNKIDLELGSSNLGEKFTLHDGPPYANGSLHMGHALNKVLKDIINKYKTLKGFKVHFVPGWDCHGLPIELKVLQSLKSHERKDLDSLGLRKKATDYAKIQIKNQLEGFKRWGIWGDWDNPYLTLKNNYESAQIGVFGKMFLNGYIYRGLKPVHWSPSSRTALAEAELEYPEEHYSSSVYVSLNISNLSDEILLKLEEKDLKNKLLSNLNKLFIAIWTTTPWTIPGNEAVAINPRINYVFAEDQNGDIFLFAKDLISEISEKLEREFNTLIDVKGSMLTGIEYKHPTKNKFCNIVIGGDYITTESGTGIVHTAPGHGMDDFNVGKKYHLPITCIVDEKGNLNNHAEKFCGLNVLKDANDLIIEDLKKNNLLLLKEKYKHRYPYDWRTKKPTIFRATEQWFASVEGFRSSALKAIEDVEWMPKTGKKRIYSMVVGRGDWCISRQRSWGVPIPVFYEKKGKEILLNSETINHIQKLFNEHGADIWWDWDEKDLLPKQYKEESDRWIKGLDTMDVWFDSGSSWAAVCEQREELAYPADLYLEGSDQHRGWFQSSLLTSVAVNNKPPYKKVLTHGFALDENGRKMSKSLGNVVDPNIIINGGSNQKIQPAYGADVLRLWVSSVDYSVDVPIGSNILKQLSDVYRKVRNTARYLLGNIHDYDPIDEEIDIDQLPILDQWMLNRLVDVSDQITIAYENYEFSKFFQILQSFCVVDLSNFYLDIAKDRLYVSAKSSIRRRTCQFVMSKIVENLAVLISPVLCHMAEDIWQNIPYSTNEKSVFERGWPNLPKSWINPELNERISNLRKLRVEINKAIEGCRTQQIIGAALETEVNYLPENEIIKNSLSWLEKFGNKEVDLYSDWLIVSKFNVVNNLFEDYLIIDDNELGKIQILKAKGQKCDRCWHYQSNTVMGIEDTKLCKRCANIITS</sequence>